<gene>
    <name type="primary">xylA</name>
</gene>
<feature type="chain" id="PRO_0000195810" description="Xylose isomerase">
    <location>
        <begin position="1"/>
        <end position="435"/>
    </location>
</feature>
<feature type="active site" evidence="1">
    <location>
        <position position="99"/>
    </location>
</feature>
<feature type="active site" evidence="1">
    <location>
        <position position="102"/>
    </location>
</feature>
<feature type="binding site" evidence="1">
    <location>
        <position position="230"/>
    </location>
    <ligand>
        <name>Mg(2+)</name>
        <dbReference type="ChEBI" id="CHEBI:18420"/>
        <label>1</label>
    </ligand>
</feature>
<feature type="binding site" evidence="1">
    <location>
        <position position="266"/>
    </location>
    <ligand>
        <name>Mg(2+)</name>
        <dbReference type="ChEBI" id="CHEBI:18420"/>
        <label>1</label>
    </ligand>
</feature>
<feature type="binding site" evidence="1">
    <location>
        <position position="266"/>
    </location>
    <ligand>
        <name>Mg(2+)</name>
        <dbReference type="ChEBI" id="CHEBI:18420"/>
        <label>2</label>
    </ligand>
</feature>
<feature type="binding site" evidence="1">
    <location>
        <position position="269"/>
    </location>
    <ligand>
        <name>Mg(2+)</name>
        <dbReference type="ChEBI" id="CHEBI:18420"/>
        <label>2</label>
    </ligand>
</feature>
<feature type="binding site" evidence="1">
    <location>
        <position position="294"/>
    </location>
    <ligand>
        <name>Mg(2+)</name>
        <dbReference type="ChEBI" id="CHEBI:18420"/>
        <label>1</label>
    </ligand>
</feature>
<feature type="binding site" evidence="1">
    <location>
        <position position="305"/>
    </location>
    <ligand>
        <name>Mg(2+)</name>
        <dbReference type="ChEBI" id="CHEBI:18420"/>
        <label>2</label>
    </ligand>
</feature>
<feature type="binding site" evidence="1">
    <location>
        <position position="307"/>
    </location>
    <ligand>
        <name>Mg(2+)</name>
        <dbReference type="ChEBI" id="CHEBI:18420"/>
        <label>2</label>
    </ligand>
</feature>
<feature type="binding site" evidence="1">
    <location>
        <position position="337"/>
    </location>
    <ligand>
        <name>Mg(2+)</name>
        <dbReference type="ChEBI" id="CHEBI:18420"/>
        <label>1</label>
    </ligand>
</feature>
<reference key="1">
    <citation type="journal article" date="1998" name="Appl. Environ. Microbiol.">
        <title>Sequencing and characterization of the xyl operon of a Gram-positive bacterium, Tetragenococcus halophila.</title>
        <authorList>
            <person name="Takeda Y."/>
            <person name="Takase K."/>
            <person name="Yamato I."/>
            <person name="Abe K."/>
        </authorList>
    </citation>
    <scope>NUCLEOTIDE SEQUENCE [GENOMIC DNA]</scope>
    <source>
        <strain>I-13</strain>
    </source>
</reference>
<accession>O82845</accession>
<keyword id="KW-0119">Carbohydrate metabolism</keyword>
<keyword id="KW-0963">Cytoplasm</keyword>
<keyword id="KW-0413">Isomerase</keyword>
<keyword id="KW-0460">Magnesium</keyword>
<keyword id="KW-0479">Metal-binding</keyword>
<keyword id="KW-0859">Xylose metabolism</keyword>
<evidence type="ECO:0000250" key="1"/>
<evidence type="ECO:0000305" key="2"/>
<proteinExistence type="inferred from homology"/>
<dbReference type="EC" id="5.3.1.5"/>
<dbReference type="EMBL" id="AB009593">
    <property type="protein sequence ID" value="BAA31871.1"/>
    <property type="molecule type" value="Genomic_DNA"/>
</dbReference>
<dbReference type="RefSeq" id="WP_094243826.1">
    <property type="nucleotide sequence ID" value="NZ_CP020017.1"/>
</dbReference>
<dbReference type="SMR" id="O82845"/>
<dbReference type="GO" id="GO:0005737">
    <property type="term" value="C:cytoplasm"/>
    <property type="evidence" value="ECO:0007669"/>
    <property type="project" value="UniProtKB-SubCell"/>
</dbReference>
<dbReference type="GO" id="GO:0000287">
    <property type="term" value="F:magnesium ion binding"/>
    <property type="evidence" value="ECO:0007669"/>
    <property type="project" value="UniProtKB-UniRule"/>
</dbReference>
<dbReference type="GO" id="GO:0009045">
    <property type="term" value="F:xylose isomerase activity"/>
    <property type="evidence" value="ECO:0007669"/>
    <property type="project" value="UniProtKB-UniRule"/>
</dbReference>
<dbReference type="GO" id="GO:0042732">
    <property type="term" value="P:D-xylose metabolic process"/>
    <property type="evidence" value="ECO:0007669"/>
    <property type="project" value="UniProtKB-UniRule"/>
</dbReference>
<dbReference type="Gene3D" id="3.20.20.150">
    <property type="entry name" value="Divalent-metal-dependent TIM barrel enzymes"/>
    <property type="match status" value="1"/>
</dbReference>
<dbReference type="HAMAP" id="MF_00455">
    <property type="entry name" value="Xylose_isom_A"/>
    <property type="match status" value="1"/>
</dbReference>
<dbReference type="InterPro" id="IPR036237">
    <property type="entry name" value="Xyl_isomerase-like_sf"/>
</dbReference>
<dbReference type="InterPro" id="IPR013452">
    <property type="entry name" value="Xylose_isom_bac"/>
</dbReference>
<dbReference type="InterPro" id="IPR001998">
    <property type="entry name" value="Xylose_isomerase"/>
</dbReference>
<dbReference type="NCBIfam" id="NF003998">
    <property type="entry name" value="PRK05474.1"/>
    <property type="match status" value="1"/>
</dbReference>
<dbReference type="NCBIfam" id="TIGR02630">
    <property type="entry name" value="xylose_isom_A"/>
    <property type="match status" value="1"/>
</dbReference>
<dbReference type="PANTHER" id="PTHR48408">
    <property type="match status" value="1"/>
</dbReference>
<dbReference type="PANTHER" id="PTHR48408:SF1">
    <property type="entry name" value="XYLOSE ISOMERASE"/>
    <property type="match status" value="1"/>
</dbReference>
<dbReference type="PRINTS" id="PR00688">
    <property type="entry name" value="XYLOSISMRASE"/>
</dbReference>
<dbReference type="SUPFAM" id="SSF51658">
    <property type="entry name" value="Xylose isomerase-like"/>
    <property type="match status" value="1"/>
</dbReference>
<dbReference type="PROSITE" id="PS51415">
    <property type="entry name" value="XYLOSE_ISOMERASE"/>
    <property type="match status" value="1"/>
</dbReference>
<sequence length="435" mass="49411">MDYFENVPKVQYEGKNAKSKYAFRHYNPEEIIMGKPMKDHLRFSVAFWHTMTEDGSDPFGDGTYQRNWEGSTPMETAKNRVDAFFEILEKLGAEYFCFHDVDIAPQGDSLKEFLENIDVMTDYIKGKMDKTGVKLLWNTANMFTHPTFVNGAATTNNADVYSMAAAQVKKGLDVSKKLNGENYVFWGGREGYENLLNTDMNFELDNLARFYQMVIDYAQKIDYHPQFLIEPKPKEPTKHQYDYDAATAMAFIQKYNLEDSFKLNLEANHATLAGHTFEHELNVAKNYNALGSLDANQGDLLLGWDTDEFPTDIYTATLAMYEVLDFGGIAPGGLNFDAKVRRTSFAMDDLILAHIAGMDTYARGLRAAAKMKDDNFFEQIIANRYESFSSGIGKQIVENKEDLESLTNYALSLNGVENKSGHIEHLKSLLNDYLV</sequence>
<comment type="catalytic activity">
    <reaction>
        <text>alpha-D-xylose = alpha-D-xylulofuranose</text>
        <dbReference type="Rhea" id="RHEA:22816"/>
        <dbReference type="ChEBI" id="CHEBI:28518"/>
        <dbReference type="ChEBI" id="CHEBI:188998"/>
        <dbReference type="EC" id="5.3.1.5"/>
    </reaction>
</comment>
<comment type="cofactor">
    <cofactor evidence="1">
        <name>Mg(2+)</name>
        <dbReference type="ChEBI" id="CHEBI:18420"/>
    </cofactor>
    <text evidence="1">Binds 2 magnesium ions per subunit.</text>
</comment>
<comment type="subunit">
    <text evidence="1">Homotetramer.</text>
</comment>
<comment type="subcellular location">
    <subcellularLocation>
        <location evidence="1">Cytoplasm</location>
    </subcellularLocation>
</comment>
<comment type="similarity">
    <text evidence="2">Belongs to the xylose isomerase family.</text>
</comment>
<name>XYLA_TETHA</name>
<organism>
    <name type="scientific">Tetragenococcus halophilus</name>
    <name type="common">Pediococcus halophilus</name>
    <dbReference type="NCBI Taxonomy" id="51669"/>
    <lineage>
        <taxon>Bacteria</taxon>
        <taxon>Bacillati</taxon>
        <taxon>Bacillota</taxon>
        <taxon>Bacilli</taxon>
        <taxon>Lactobacillales</taxon>
        <taxon>Enterococcaceae</taxon>
        <taxon>Tetragenococcus</taxon>
    </lineage>
</organism>
<protein>
    <recommendedName>
        <fullName>Xylose isomerase</fullName>
        <ecNumber>5.3.1.5</ecNumber>
    </recommendedName>
</protein>